<sequence>MLIKKVELVKTAFKPGDYPEPVKREVAFAGRSNVGKSTLLNTLFQRKLAHTSSKPGKTRSINFYLVNSKYYFVDLPGYGFASASKQELARWKELIEDYFSTRDNLNLVTILMDSRHPMQKNDYKMLEWIKDYSIPFIVVLTKTDKLSGNELKKMIQIYEKELKLWGSPPIIPFSAKTRRGLNELLKILIP</sequence>
<dbReference type="EMBL" id="CP001634">
    <property type="protein sequence ID" value="ACR79257.1"/>
    <property type="molecule type" value="Genomic_DNA"/>
</dbReference>
<dbReference type="SMR" id="C5CEL1"/>
<dbReference type="STRING" id="521045.Kole_0537"/>
<dbReference type="KEGG" id="kol:Kole_0537"/>
<dbReference type="eggNOG" id="COG0218">
    <property type="taxonomic scope" value="Bacteria"/>
</dbReference>
<dbReference type="HOGENOM" id="CLU_033732_3_0_0"/>
<dbReference type="OrthoDB" id="9804921at2"/>
<dbReference type="Proteomes" id="UP000002382">
    <property type="component" value="Chromosome"/>
</dbReference>
<dbReference type="GO" id="GO:0005829">
    <property type="term" value="C:cytosol"/>
    <property type="evidence" value="ECO:0007669"/>
    <property type="project" value="TreeGrafter"/>
</dbReference>
<dbReference type="GO" id="GO:0005525">
    <property type="term" value="F:GTP binding"/>
    <property type="evidence" value="ECO:0007669"/>
    <property type="project" value="UniProtKB-UniRule"/>
</dbReference>
<dbReference type="GO" id="GO:0046872">
    <property type="term" value="F:metal ion binding"/>
    <property type="evidence" value="ECO:0007669"/>
    <property type="project" value="UniProtKB-KW"/>
</dbReference>
<dbReference type="GO" id="GO:0000917">
    <property type="term" value="P:division septum assembly"/>
    <property type="evidence" value="ECO:0007669"/>
    <property type="project" value="UniProtKB-KW"/>
</dbReference>
<dbReference type="CDD" id="cd01876">
    <property type="entry name" value="YihA_EngB"/>
    <property type="match status" value="1"/>
</dbReference>
<dbReference type="FunFam" id="3.40.50.300:FF:000098">
    <property type="entry name" value="Probable GTP-binding protein EngB"/>
    <property type="match status" value="1"/>
</dbReference>
<dbReference type="Gene3D" id="3.40.50.300">
    <property type="entry name" value="P-loop containing nucleotide triphosphate hydrolases"/>
    <property type="match status" value="1"/>
</dbReference>
<dbReference type="HAMAP" id="MF_00321">
    <property type="entry name" value="GTPase_EngB"/>
    <property type="match status" value="1"/>
</dbReference>
<dbReference type="InterPro" id="IPR030393">
    <property type="entry name" value="G_ENGB_dom"/>
</dbReference>
<dbReference type="InterPro" id="IPR006073">
    <property type="entry name" value="GTP-bd"/>
</dbReference>
<dbReference type="InterPro" id="IPR019987">
    <property type="entry name" value="GTP-bd_ribosome_bio_YsxC"/>
</dbReference>
<dbReference type="InterPro" id="IPR027417">
    <property type="entry name" value="P-loop_NTPase"/>
</dbReference>
<dbReference type="InterPro" id="IPR005225">
    <property type="entry name" value="Small_GTP-bd"/>
</dbReference>
<dbReference type="NCBIfam" id="TIGR03598">
    <property type="entry name" value="GTPase_YsxC"/>
    <property type="match status" value="1"/>
</dbReference>
<dbReference type="NCBIfam" id="TIGR00231">
    <property type="entry name" value="small_GTP"/>
    <property type="match status" value="1"/>
</dbReference>
<dbReference type="PANTHER" id="PTHR11649:SF13">
    <property type="entry name" value="ENGB-TYPE G DOMAIN-CONTAINING PROTEIN"/>
    <property type="match status" value="1"/>
</dbReference>
<dbReference type="PANTHER" id="PTHR11649">
    <property type="entry name" value="MSS1/TRME-RELATED GTP-BINDING PROTEIN"/>
    <property type="match status" value="1"/>
</dbReference>
<dbReference type="Pfam" id="PF01926">
    <property type="entry name" value="MMR_HSR1"/>
    <property type="match status" value="1"/>
</dbReference>
<dbReference type="SUPFAM" id="SSF52540">
    <property type="entry name" value="P-loop containing nucleoside triphosphate hydrolases"/>
    <property type="match status" value="1"/>
</dbReference>
<dbReference type="PROSITE" id="PS51706">
    <property type="entry name" value="G_ENGB"/>
    <property type="match status" value="1"/>
</dbReference>
<comment type="function">
    <text evidence="1">Necessary for normal cell division and for the maintenance of normal septation.</text>
</comment>
<comment type="cofactor">
    <cofactor evidence="1">
        <name>Mg(2+)</name>
        <dbReference type="ChEBI" id="CHEBI:18420"/>
    </cofactor>
</comment>
<comment type="similarity">
    <text evidence="1">Belongs to the TRAFAC class TrmE-Era-EngA-EngB-Septin-like GTPase superfamily. EngB GTPase family.</text>
</comment>
<protein>
    <recommendedName>
        <fullName evidence="1">Probable GTP-binding protein EngB</fullName>
    </recommendedName>
</protein>
<keyword id="KW-0131">Cell cycle</keyword>
<keyword id="KW-0132">Cell division</keyword>
<keyword id="KW-0342">GTP-binding</keyword>
<keyword id="KW-0460">Magnesium</keyword>
<keyword id="KW-0479">Metal-binding</keyword>
<keyword id="KW-0547">Nucleotide-binding</keyword>
<keyword id="KW-1185">Reference proteome</keyword>
<keyword id="KW-0717">Septation</keyword>
<accession>C5CEL1</accession>
<organism>
    <name type="scientific">Kosmotoga olearia (strain ATCC BAA-1733 / DSM 21960 / TBF 19.5.1)</name>
    <dbReference type="NCBI Taxonomy" id="521045"/>
    <lineage>
        <taxon>Bacteria</taxon>
        <taxon>Thermotogati</taxon>
        <taxon>Thermotogota</taxon>
        <taxon>Thermotogae</taxon>
        <taxon>Kosmotogales</taxon>
        <taxon>Kosmotogaceae</taxon>
        <taxon>Kosmotoga</taxon>
    </lineage>
</organism>
<proteinExistence type="inferred from homology"/>
<reference key="1">
    <citation type="submission" date="2009-06" db="EMBL/GenBank/DDBJ databases">
        <title>Complete sequence of Thermotogales bacterium TBF 19.5.1.</title>
        <authorList>
            <consortium name="US DOE Joint Genome Institute"/>
            <person name="Lucas S."/>
            <person name="Copeland A."/>
            <person name="Lapidus A."/>
            <person name="Glavina del Rio T."/>
            <person name="Tice H."/>
            <person name="Bruce D."/>
            <person name="Goodwin L."/>
            <person name="Pitluck S."/>
            <person name="Chertkov O."/>
            <person name="Brettin T."/>
            <person name="Detter J.C."/>
            <person name="Han C."/>
            <person name="Schmutz J."/>
            <person name="Larimer F."/>
            <person name="Land M."/>
            <person name="Hauser L."/>
            <person name="Kyrpides N."/>
            <person name="Ovchinnikova G."/>
            <person name="Noll K."/>
        </authorList>
    </citation>
    <scope>NUCLEOTIDE SEQUENCE [LARGE SCALE GENOMIC DNA]</scope>
    <source>
        <strain>ATCC BAA-1733 / DSM 21960 / TBF 19.5.1</strain>
    </source>
</reference>
<feature type="chain" id="PRO_1000205132" description="Probable GTP-binding protein EngB">
    <location>
        <begin position="1"/>
        <end position="190"/>
    </location>
</feature>
<feature type="domain" description="EngB-type G" evidence="1">
    <location>
        <begin position="22"/>
        <end position="190"/>
    </location>
</feature>
<feature type="binding site" evidence="1">
    <location>
        <begin position="30"/>
        <end position="37"/>
    </location>
    <ligand>
        <name>GTP</name>
        <dbReference type="ChEBI" id="CHEBI:37565"/>
    </ligand>
</feature>
<feature type="binding site" evidence="1">
    <location>
        <position position="37"/>
    </location>
    <ligand>
        <name>Mg(2+)</name>
        <dbReference type="ChEBI" id="CHEBI:18420"/>
    </ligand>
</feature>
<feature type="binding site" evidence="1">
    <location>
        <begin position="56"/>
        <end position="60"/>
    </location>
    <ligand>
        <name>GTP</name>
        <dbReference type="ChEBI" id="CHEBI:37565"/>
    </ligand>
</feature>
<feature type="binding site" evidence="1">
    <location>
        <position position="58"/>
    </location>
    <ligand>
        <name>Mg(2+)</name>
        <dbReference type="ChEBI" id="CHEBI:18420"/>
    </ligand>
</feature>
<feature type="binding site" evidence="1">
    <location>
        <begin position="74"/>
        <end position="77"/>
    </location>
    <ligand>
        <name>GTP</name>
        <dbReference type="ChEBI" id="CHEBI:37565"/>
    </ligand>
</feature>
<feature type="binding site" evidence="1">
    <location>
        <begin position="141"/>
        <end position="144"/>
    </location>
    <ligand>
        <name>GTP</name>
        <dbReference type="ChEBI" id="CHEBI:37565"/>
    </ligand>
</feature>
<feature type="binding site" evidence="1">
    <location>
        <begin position="173"/>
        <end position="175"/>
    </location>
    <ligand>
        <name>GTP</name>
        <dbReference type="ChEBI" id="CHEBI:37565"/>
    </ligand>
</feature>
<evidence type="ECO:0000255" key="1">
    <source>
        <dbReference type="HAMAP-Rule" id="MF_00321"/>
    </source>
</evidence>
<name>ENGB_KOSOT</name>
<gene>
    <name evidence="1" type="primary">engB</name>
    <name type="ordered locus">Kole_0537</name>
</gene>